<proteinExistence type="inferred from homology"/>
<gene>
    <name evidence="1" type="primary">cysC</name>
    <name type="ordered locus">Pro_0190</name>
</gene>
<organism>
    <name type="scientific">Prochlorococcus marinus (strain SARG / CCMP1375 / SS120)</name>
    <dbReference type="NCBI Taxonomy" id="167539"/>
    <lineage>
        <taxon>Bacteria</taxon>
        <taxon>Bacillati</taxon>
        <taxon>Cyanobacteriota</taxon>
        <taxon>Cyanophyceae</taxon>
        <taxon>Synechococcales</taxon>
        <taxon>Prochlorococcaceae</taxon>
        <taxon>Prochlorococcus</taxon>
    </lineage>
</organism>
<evidence type="ECO:0000255" key="1">
    <source>
        <dbReference type="HAMAP-Rule" id="MF_00065"/>
    </source>
</evidence>
<dbReference type="EC" id="2.7.1.25" evidence="1"/>
<dbReference type="EMBL" id="AE017126">
    <property type="protein sequence ID" value="AAP99236.1"/>
    <property type="molecule type" value="Genomic_DNA"/>
</dbReference>
<dbReference type="RefSeq" id="NP_874584.1">
    <property type="nucleotide sequence ID" value="NC_005042.1"/>
</dbReference>
<dbReference type="RefSeq" id="WP_011124345.1">
    <property type="nucleotide sequence ID" value="NC_005042.1"/>
</dbReference>
<dbReference type="SMR" id="Q7VE24"/>
<dbReference type="STRING" id="167539.Pro_0190"/>
<dbReference type="EnsemblBacteria" id="AAP99236">
    <property type="protein sequence ID" value="AAP99236"/>
    <property type="gene ID" value="Pro_0190"/>
</dbReference>
<dbReference type="KEGG" id="pma:Pro_0190"/>
<dbReference type="PATRIC" id="fig|167539.5.peg.197"/>
<dbReference type="eggNOG" id="COG0529">
    <property type="taxonomic scope" value="Bacteria"/>
</dbReference>
<dbReference type="HOGENOM" id="CLU_046932_1_0_3"/>
<dbReference type="OrthoDB" id="9804504at2"/>
<dbReference type="UniPathway" id="UPA00140">
    <property type="reaction ID" value="UER00205"/>
</dbReference>
<dbReference type="Proteomes" id="UP000001420">
    <property type="component" value="Chromosome"/>
</dbReference>
<dbReference type="GO" id="GO:0004020">
    <property type="term" value="F:adenylylsulfate kinase activity"/>
    <property type="evidence" value="ECO:0007669"/>
    <property type="project" value="UniProtKB-UniRule"/>
</dbReference>
<dbReference type="GO" id="GO:0005524">
    <property type="term" value="F:ATP binding"/>
    <property type="evidence" value="ECO:0007669"/>
    <property type="project" value="UniProtKB-UniRule"/>
</dbReference>
<dbReference type="GO" id="GO:0070814">
    <property type="term" value="P:hydrogen sulfide biosynthetic process"/>
    <property type="evidence" value="ECO:0007669"/>
    <property type="project" value="UniProtKB-UniRule"/>
</dbReference>
<dbReference type="GO" id="GO:0000103">
    <property type="term" value="P:sulfate assimilation"/>
    <property type="evidence" value="ECO:0007669"/>
    <property type="project" value="UniProtKB-UniRule"/>
</dbReference>
<dbReference type="CDD" id="cd02027">
    <property type="entry name" value="APSK"/>
    <property type="match status" value="1"/>
</dbReference>
<dbReference type="FunFam" id="3.40.50.300:FF:000212">
    <property type="entry name" value="Adenylyl-sulfate kinase"/>
    <property type="match status" value="1"/>
</dbReference>
<dbReference type="Gene3D" id="3.40.50.300">
    <property type="entry name" value="P-loop containing nucleotide triphosphate hydrolases"/>
    <property type="match status" value="1"/>
</dbReference>
<dbReference type="HAMAP" id="MF_00065">
    <property type="entry name" value="Adenylyl_sulf_kinase"/>
    <property type="match status" value="1"/>
</dbReference>
<dbReference type="InterPro" id="IPR002891">
    <property type="entry name" value="APS_kinase"/>
</dbReference>
<dbReference type="InterPro" id="IPR027417">
    <property type="entry name" value="P-loop_NTPase"/>
</dbReference>
<dbReference type="NCBIfam" id="TIGR00455">
    <property type="entry name" value="apsK"/>
    <property type="match status" value="1"/>
</dbReference>
<dbReference type="NCBIfam" id="NF003013">
    <property type="entry name" value="PRK03846.1"/>
    <property type="match status" value="1"/>
</dbReference>
<dbReference type="PANTHER" id="PTHR11055">
    <property type="entry name" value="BIFUNCTIONAL 3'-PHOSPHOADENOSINE 5'-PHOSPHOSULFATE SYNTHASE"/>
    <property type="match status" value="1"/>
</dbReference>
<dbReference type="PANTHER" id="PTHR11055:SF1">
    <property type="entry name" value="PAPS SYNTHETASE, ISOFORM D"/>
    <property type="match status" value="1"/>
</dbReference>
<dbReference type="Pfam" id="PF01583">
    <property type="entry name" value="APS_kinase"/>
    <property type="match status" value="1"/>
</dbReference>
<dbReference type="SUPFAM" id="SSF52540">
    <property type="entry name" value="P-loop containing nucleoside triphosphate hydrolases"/>
    <property type="match status" value="1"/>
</dbReference>
<sequence>MTAQASNIVWHKASVDRESIEKERGHKSVIIWFTGLSGSGKSTLANALNVALFKKGLATYVLDGDNIRHGLCNDLGFSDSDREENIRRIGEVAKLFLDAGVIVLTAFVSPFRSDREKARKLVKENDFLEIYCAANLDICETRDTKGLYAKARAGEIKDFTGISSPYEEPENPDLKIDTGLKDIDQCVEEVISKLIELNLVK</sequence>
<comment type="function">
    <text evidence="1">Catalyzes the synthesis of activated sulfate.</text>
</comment>
<comment type="catalytic activity">
    <reaction evidence="1">
        <text>adenosine 5'-phosphosulfate + ATP = 3'-phosphoadenylyl sulfate + ADP + H(+)</text>
        <dbReference type="Rhea" id="RHEA:24152"/>
        <dbReference type="ChEBI" id="CHEBI:15378"/>
        <dbReference type="ChEBI" id="CHEBI:30616"/>
        <dbReference type="ChEBI" id="CHEBI:58243"/>
        <dbReference type="ChEBI" id="CHEBI:58339"/>
        <dbReference type="ChEBI" id="CHEBI:456216"/>
        <dbReference type="EC" id="2.7.1.25"/>
    </reaction>
</comment>
<comment type="pathway">
    <text evidence="1">Sulfur metabolism; hydrogen sulfide biosynthesis; sulfite from sulfate: step 2/3.</text>
</comment>
<comment type="similarity">
    <text evidence="1">Belongs to the APS kinase family.</text>
</comment>
<feature type="chain" id="PRO_1000009017" description="Adenylyl-sulfate kinase">
    <location>
        <begin position="1"/>
        <end position="201"/>
    </location>
</feature>
<feature type="active site" description="Phosphoserine intermediate" evidence="1">
    <location>
        <position position="109"/>
    </location>
</feature>
<feature type="binding site" evidence="1">
    <location>
        <begin position="35"/>
        <end position="42"/>
    </location>
    <ligand>
        <name>ATP</name>
        <dbReference type="ChEBI" id="CHEBI:30616"/>
    </ligand>
</feature>
<reference key="1">
    <citation type="journal article" date="2003" name="Proc. Natl. Acad. Sci. U.S.A.">
        <title>Genome sequence of the cyanobacterium Prochlorococcus marinus SS120, a nearly minimal oxyphototrophic genome.</title>
        <authorList>
            <person name="Dufresne A."/>
            <person name="Salanoubat M."/>
            <person name="Partensky F."/>
            <person name="Artiguenave F."/>
            <person name="Axmann I.M."/>
            <person name="Barbe V."/>
            <person name="Duprat S."/>
            <person name="Galperin M.Y."/>
            <person name="Koonin E.V."/>
            <person name="Le Gall F."/>
            <person name="Makarova K.S."/>
            <person name="Ostrowski M."/>
            <person name="Oztas S."/>
            <person name="Robert C."/>
            <person name="Rogozin I.B."/>
            <person name="Scanlan D.J."/>
            <person name="Tandeau de Marsac N."/>
            <person name="Weissenbach J."/>
            <person name="Wincker P."/>
            <person name="Wolf Y.I."/>
            <person name="Hess W.R."/>
        </authorList>
    </citation>
    <scope>NUCLEOTIDE SEQUENCE [LARGE SCALE GENOMIC DNA]</scope>
    <source>
        <strain>SARG / CCMP1375 / SS120</strain>
    </source>
</reference>
<keyword id="KW-0067">ATP-binding</keyword>
<keyword id="KW-0418">Kinase</keyword>
<keyword id="KW-0547">Nucleotide-binding</keyword>
<keyword id="KW-0597">Phosphoprotein</keyword>
<keyword id="KW-1185">Reference proteome</keyword>
<keyword id="KW-0808">Transferase</keyword>
<protein>
    <recommendedName>
        <fullName evidence="1">Adenylyl-sulfate kinase</fullName>
        <ecNumber evidence="1">2.7.1.25</ecNumber>
    </recommendedName>
    <alternativeName>
        <fullName evidence="1">APS kinase</fullName>
    </alternativeName>
    <alternativeName>
        <fullName evidence="1">ATP adenosine-5'-phosphosulfate 3'-phosphotransferase</fullName>
    </alternativeName>
    <alternativeName>
        <fullName evidence="1">Adenosine-5'-phosphosulfate kinase</fullName>
    </alternativeName>
</protein>
<name>CYSC_PROMA</name>
<accession>Q7VE24</accession>